<feature type="chain" id="PRO_0000245690" description="NAD(P)H-quinone oxidoreductase subunit I">
    <location>
        <begin position="1"/>
        <end position="203"/>
    </location>
</feature>
<feature type="domain" description="4Fe-4S ferredoxin-type 1">
    <location>
        <begin position="55"/>
        <end position="84"/>
    </location>
</feature>
<feature type="domain" description="4Fe-4S ferredoxin-type 2">
    <location>
        <begin position="95"/>
        <end position="124"/>
    </location>
</feature>
<feature type="binding site" evidence="1">
    <location>
        <position position="64"/>
    </location>
    <ligand>
        <name>[4Fe-4S] cluster</name>
        <dbReference type="ChEBI" id="CHEBI:49883"/>
        <label>1</label>
    </ligand>
</feature>
<feature type="binding site" evidence="1">
    <location>
        <position position="67"/>
    </location>
    <ligand>
        <name>[4Fe-4S] cluster</name>
        <dbReference type="ChEBI" id="CHEBI:49883"/>
        <label>1</label>
    </ligand>
</feature>
<feature type="binding site" evidence="1">
    <location>
        <position position="70"/>
    </location>
    <ligand>
        <name>[4Fe-4S] cluster</name>
        <dbReference type="ChEBI" id="CHEBI:49883"/>
        <label>1</label>
    </ligand>
</feature>
<feature type="binding site" evidence="1">
    <location>
        <position position="74"/>
    </location>
    <ligand>
        <name>[4Fe-4S] cluster</name>
        <dbReference type="ChEBI" id="CHEBI:49883"/>
        <label>2</label>
    </ligand>
</feature>
<feature type="binding site" evidence="1">
    <location>
        <position position="104"/>
    </location>
    <ligand>
        <name>[4Fe-4S] cluster</name>
        <dbReference type="ChEBI" id="CHEBI:49883"/>
        <label>2</label>
    </ligand>
</feature>
<feature type="binding site" evidence="1">
    <location>
        <position position="107"/>
    </location>
    <ligand>
        <name>[4Fe-4S] cluster</name>
        <dbReference type="ChEBI" id="CHEBI:49883"/>
        <label>2</label>
    </ligand>
</feature>
<feature type="binding site" evidence="1">
    <location>
        <position position="110"/>
    </location>
    <ligand>
        <name>[4Fe-4S] cluster</name>
        <dbReference type="ChEBI" id="CHEBI:49883"/>
        <label>2</label>
    </ligand>
</feature>
<feature type="binding site" evidence="1">
    <location>
        <position position="114"/>
    </location>
    <ligand>
        <name>[4Fe-4S] cluster</name>
        <dbReference type="ChEBI" id="CHEBI:49883"/>
        <label>1</label>
    </ligand>
</feature>
<name>NDHI_PICP2</name>
<dbReference type="EC" id="7.1.1.-"/>
<dbReference type="EMBL" id="AF381034">
    <property type="protein sequence ID" value="AAN03534.1"/>
    <property type="molecule type" value="Genomic_DNA"/>
</dbReference>
<dbReference type="EMBL" id="CP000951">
    <property type="protein sequence ID" value="ACA98929.1"/>
    <property type="molecule type" value="Genomic_DNA"/>
</dbReference>
<dbReference type="RefSeq" id="WP_012306553.1">
    <property type="nucleotide sequence ID" value="NZ_JAHHPU010000001.1"/>
</dbReference>
<dbReference type="SMR" id="Q8KX59"/>
<dbReference type="STRING" id="32049.SYNPCC7002_A0925"/>
<dbReference type="KEGG" id="syp:SYNPCC7002_A0925"/>
<dbReference type="eggNOG" id="COG1143">
    <property type="taxonomic scope" value="Bacteria"/>
</dbReference>
<dbReference type="HOGENOM" id="CLU_122804_0_0_3"/>
<dbReference type="Proteomes" id="UP000001688">
    <property type="component" value="Chromosome"/>
</dbReference>
<dbReference type="GO" id="GO:0031676">
    <property type="term" value="C:plasma membrane-derived thylakoid membrane"/>
    <property type="evidence" value="ECO:0007669"/>
    <property type="project" value="UniProtKB-SubCell"/>
</dbReference>
<dbReference type="GO" id="GO:0051539">
    <property type="term" value="F:4 iron, 4 sulfur cluster binding"/>
    <property type="evidence" value="ECO:0007669"/>
    <property type="project" value="UniProtKB-KW"/>
</dbReference>
<dbReference type="GO" id="GO:0005506">
    <property type="term" value="F:iron ion binding"/>
    <property type="evidence" value="ECO:0007669"/>
    <property type="project" value="UniProtKB-UniRule"/>
</dbReference>
<dbReference type="GO" id="GO:0008137">
    <property type="term" value="F:NADH dehydrogenase (ubiquinone) activity"/>
    <property type="evidence" value="ECO:0007669"/>
    <property type="project" value="InterPro"/>
</dbReference>
<dbReference type="GO" id="GO:0048038">
    <property type="term" value="F:quinone binding"/>
    <property type="evidence" value="ECO:0007669"/>
    <property type="project" value="UniProtKB-KW"/>
</dbReference>
<dbReference type="GO" id="GO:0019684">
    <property type="term" value="P:photosynthesis, light reaction"/>
    <property type="evidence" value="ECO:0007669"/>
    <property type="project" value="UniProtKB-UniRule"/>
</dbReference>
<dbReference type="Gene3D" id="3.30.70.3270">
    <property type="match status" value="1"/>
</dbReference>
<dbReference type="HAMAP" id="MF_01351">
    <property type="entry name" value="NDH1_NuoI"/>
    <property type="match status" value="1"/>
</dbReference>
<dbReference type="InterPro" id="IPR017896">
    <property type="entry name" value="4Fe4S_Fe-S-bd"/>
</dbReference>
<dbReference type="InterPro" id="IPR017900">
    <property type="entry name" value="4Fe4S_Fe_S_CS"/>
</dbReference>
<dbReference type="InterPro" id="IPR010226">
    <property type="entry name" value="NADH_quinone_OxRdtase_chainI"/>
</dbReference>
<dbReference type="InterPro" id="IPR004497">
    <property type="entry name" value="NDHI"/>
</dbReference>
<dbReference type="NCBIfam" id="TIGR00403">
    <property type="entry name" value="ndhI"/>
    <property type="match status" value="1"/>
</dbReference>
<dbReference type="NCBIfam" id="TIGR01971">
    <property type="entry name" value="NuoI"/>
    <property type="match status" value="1"/>
</dbReference>
<dbReference type="NCBIfam" id="NF004537">
    <property type="entry name" value="PRK05888.1-3"/>
    <property type="match status" value="1"/>
</dbReference>
<dbReference type="PANTHER" id="PTHR47275">
    <property type="entry name" value="NAD(P)H-QUINONE OXIDOREDUCTASE SUBUNIT I, CHLOROPLASTIC"/>
    <property type="match status" value="1"/>
</dbReference>
<dbReference type="PANTHER" id="PTHR47275:SF1">
    <property type="entry name" value="NAD(P)H-QUINONE OXIDOREDUCTASE SUBUNIT I, CHLOROPLASTIC"/>
    <property type="match status" value="1"/>
</dbReference>
<dbReference type="Pfam" id="PF12838">
    <property type="entry name" value="Fer4_7"/>
    <property type="match status" value="1"/>
</dbReference>
<dbReference type="SUPFAM" id="SSF54862">
    <property type="entry name" value="4Fe-4S ferredoxins"/>
    <property type="match status" value="1"/>
</dbReference>
<dbReference type="PROSITE" id="PS00198">
    <property type="entry name" value="4FE4S_FER_1"/>
    <property type="match status" value="2"/>
</dbReference>
<dbReference type="PROSITE" id="PS51379">
    <property type="entry name" value="4FE4S_FER_2"/>
    <property type="match status" value="2"/>
</dbReference>
<reference key="1">
    <citation type="submission" date="2001-05" db="EMBL/GenBank/DDBJ databases">
        <title>An analysis of forty genes encoding electron transport proteins from Synechococcus sp. PCC 7002: a comparative study of electron transport proteins from cyanobacteria and chloroplasts.</title>
        <authorList>
            <person name="Nomura C.T."/>
            <person name="Persson S."/>
            <person name="Zhao J."/>
            <person name="Bryant D.A."/>
        </authorList>
    </citation>
    <scope>NUCLEOTIDE SEQUENCE [GENOMIC DNA]</scope>
</reference>
<reference key="2">
    <citation type="submission" date="2008-02" db="EMBL/GenBank/DDBJ databases">
        <title>Complete sequence of Synechococcus sp. PCC 7002.</title>
        <authorList>
            <person name="Li T."/>
            <person name="Zhao J."/>
            <person name="Zhao C."/>
            <person name="Liu Z."/>
            <person name="Zhao F."/>
            <person name="Marquardt J."/>
            <person name="Nomura C.T."/>
            <person name="Persson S."/>
            <person name="Detter J.C."/>
            <person name="Richardson P.M."/>
            <person name="Lanz C."/>
            <person name="Schuster S.C."/>
            <person name="Wang J."/>
            <person name="Li S."/>
            <person name="Huang X."/>
            <person name="Cai T."/>
            <person name="Yu Z."/>
            <person name="Luo J."/>
            <person name="Zhao J."/>
            <person name="Bryant D.A."/>
        </authorList>
    </citation>
    <scope>NUCLEOTIDE SEQUENCE [LARGE SCALE GENOMIC DNA]</scope>
    <source>
        <strain>ATCC 27264 / PCC 7002 / PR-6</strain>
    </source>
</reference>
<comment type="function">
    <text evidence="1">NDH-1 shuttles electrons from an unknown electron donor, via FMN and iron-sulfur (Fe-S) centers, to quinones in the respiratory and/or the photosynthetic chain. The immediate electron acceptor for the enzyme in this species is believed to be plastoquinone. Couples the redox reaction to proton translocation, and thus conserves the redox energy in a proton gradient (By similarity).</text>
</comment>
<comment type="catalytic activity">
    <reaction>
        <text>a plastoquinone + NADH + (n+1) H(+)(in) = a plastoquinol + NAD(+) + n H(+)(out)</text>
        <dbReference type="Rhea" id="RHEA:42608"/>
        <dbReference type="Rhea" id="RHEA-COMP:9561"/>
        <dbReference type="Rhea" id="RHEA-COMP:9562"/>
        <dbReference type="ChEBI" id="CHEBI:15378"/>
        <dbReference type="ChEBI" id="CHEBI:17757"/>
        <dbReference type="ChEBI" id="CHEBI:57540"/>
        <dbReference type="ChEBI" id="CHEBI:57945"/>
        <dbReference type="ChEBI" id="CHEBI:62192"/>
    </reaction>
</comment>
<comment type="catalytic activity">
    <reaction>
        <text>a plastoquinone + NADPH + (n+1) H(+)(in) = a plastoquinol + NADP(+) + n H(+)(out)</text>
        <dbReference type="Rhea" id="RHEA:42612"/>
        <dbReference type="Rhea" id="RHEA-COMP:9561"/>
        <dbReference type="Rhea" id="RHEA-COMP:9562"/>
        <dbReference type="ChEBI" id="CHEBI:15378"/>
        <dbReference type="ChEBI" id="CHEBI:17757"/>
        <dbReference type="ChEBI" id="CHEBI:57783"/>
        <dbReference type="ChEBI" id="CHEBI:58349"/>
        <dbReference type="ChEBI" id="CHEBI:62192"/>
    </reaction>
</comment>
<comment type="cofactor">
    <cofactor evidence="1">
        <name>[4Fe-4S] cluster</name>
        <dbReference type="ChEBI" id="CHEBI:49883"/>
    </cofactor>
    <text evidence="1">Binds 2 [4Fe-4S] clusters per subunit.</text>
</comment>
<comment type="subunit">
    <text evidence="1">NDH-1 is composed of at least 11 different subunits.</text>
</comment>
<comment type="subcellular location">
    <subcellularLocation>
        <location evidence="1">Cellular thylakoid membrane</location>
        <topology evidence="1">Peripheral membrane protein</topology>
    </subcellularLocation>
</comment>
<comment type="similarity">
    <text evidence="2">Belongs to the complex I 23 kDa subunit family.</text>
</comment>
<protein>
    <recommendedName>
        <fullName>NAD(P)H-quinone oxidoreductase subunit I</fullName>
        <ecNumber>7.1.1.-</ecNumber>
    </recommendedName>
    <alternativeName>
        <fullName>NAD(P)H dehydrogenase I subunit I</fullName>
    </alternativeName>
    <alternativeName>
        <fullName>NDH-1 subunit I</fullName>
        <shortName>NDH-I</shortName>
    </alternativeName>
</protein>
<keyword id="KW-0004">4Fe-4S</keyword>
<keyword id="KW-0408">Iron</keyword>
<keyword id="KW-0411">Iron-sulfur</keyword>
<keyword id="KW-0472">Membrane</keyword>
<keyword id="KW-0479">Metal-binding</keyword>
<keyword id="KW-0520">NAD</keyword>
<keyword id="KW-0521">NADP</keyword>
<keyword id="KW-0618">Plastoquinone</keyword>
<keyword id="KW-0874">Quinone</keyword>
<keyword id="KW-1185">Reference proteome</keyword>
<keyword id="KW-0677">Repeat</keyword>
<keyword id="KW-0793">Thylakoid</keyword>
<keyword id="KW-1278">Translocase</keyword>
<gene>
    <name type="primary">ndhI</name>
    <name type="ordered locus">SYNPCC7002_A0925</name>
</gene>
<proteinExistence type="inferred from homology"/>
<sequence length="203" mass="23439">MFKILKQVGDYAKDAAQAAKYIGQGLSVTFDHMRRRPVTVQYPYEKLIPSERFRGRIHFEFDKCIACEVCVRVCPINLPVVDWEFDKSIKKKTLKHYSIDFGVCIFCGNCVEYCPTNCLSMTEEYELATYDRHELNYDNVALGRLPYKVTQDPMVTPLRELAYLPQGVIDPHDLPQGSQRAGEHPEDILERLQAEKQQETADQ</sequence>
<organism>
    <name type="scientific">Picosynechococcus sp. (strain ATCC 27264 / PCC 7002 / PR-6)</name>
    <name type="common">Agmenellum quadruplicatum</name>
    <dbReference type="NCBI Taxonomy" id="32049"/>
    <lineage>
        <taxon>Bacteria</taxon>
        <taxon>Bacillati</taxon>
        <taxon>Cyanobacteriota</taxon>
        <taxon>Cyanophyceae</taxon>
        <taxon>Oscillatoriophycideae</taxon>
        <taxon>Chroococcales</taxon>
        <taxon>Geminocystaceae</taxon>
        <taxon>Picosynechococcus</taxon>
    </lineage>
</organism>
<evidence type="ECO:0000250" key="1"/>
<evidence type="ECO:0000305" key="2"/>
<accession>Q8KX59</accession>
<accession>B1XIY7</accession>